<organism>
    <name type="scientific">Junin mammarenavirus</name>
    <name type="common">JUNV</name>
    <name type="synonym">Junn mammarenavirus</name>
    <dbReference type="NCBI Taxonomy" id="2169991"/>
    <lineage>
        <taxon>Viruses</taxon>
        <taxon>Riboviria</taxon>
        <taxon>Orthornavirae</taxon>
        <taxon>Negarnaviricota</taxon>
        <taxon>Polyploviricotina</taxon>
        <taxon>Ellioviricetes</taxon>
        <taxon>Bunyavirales</taxon>
        <taxon>Arenaviridae</taxon>
        <taxon>Mammarenavirus</taxon>
    </lineage>
</organism>
<comment type="function">
    <molecule>Stable signal peptide</molecule>
    <text evidence="2 3 5">Functions as a cleaved signal peptide that is retained as the third component of the GP complex (GP-C) (PubMed:15367645). Helps to stabilize the spike complex in its native conformation. The SSP is required for efficient glycoprotein expression, post-translational maturation cleavage of G1 and G2, glycoprotein transport to the cell surface plasma membrane, formation of infectious virus particles, and acid pH-dependent glycoprotein-mediated cell fusion (By similarity) (PubMed:16840359).</text>
</comment>
<comment type="function">
    <molecule>Glycoprotein G1</molecule>
    <text evidence="1 6 8">Forms the virion spikes together with glycoprotein G2 (By similarity). The glycoprotein spike trimers are connected to the underlying matrix (By similarity). Mediates virus attachment to host TFRC (PubMed:17287727). This attachment induces virion internalization predominantly through clathrin-mediated endocytosis (PubMed:17287727, PubMed:19548229).</text>
</comment>
<comment type="function">
    <molecule>Glycoprotein G2</molecule>
    <text evidence="1">Forms the virion spikes together with glycoprotein G1. The glycoprotein spike trimers are connected to the underlying matrix. Class I viral fusion protein that directs fusion of viral and host endosomal membranes, leading to delivery of the nucleocapsid into the cytoplasm. Membrane fusion is mediated by irreversible conformational changes induced by acidification.</text>
</comment>
<comment type="subunit">
    <molecule>Stable signal peptide</molecule>
    <text evidence="1 3">Interacts with glycoprotein G2. Part of the GP complex (GP-C) together with glycoprotein G1 and glycoprotein G2 (PubMed:15367645). The GP-complex interacts with protein Z, which interacts with ribonucleocapsid; these interactions may induce virion budding.</text>
</comment>
<comment type="subunit">
    <molecule>Glycoprotein G1</molecule>
    <text evidence="1 6">Homotrimer; disulfide-linked. In pre-fusion state, G1 homotrimers bind G2 homotrimers via ionic interactions. Part of the GP complex (GP-C) together with glycoprotein G2 and the stable signal peptide (By similarity). Interacts with host TFRC (PubMed:17287727). The GP-complex interacts with protein Z, which interacts with ribonucleocapsid; these interactions may induce virion budding (By similarity).</text>
</comment>
<comment type="subunit">
    <molecule>Glycoprotein G2</molecule>
    <text evidence="1">Homotrimer. Interacts with the stable signal peptide. In pre-fusion state, G2 homotrimers bind G1 homotrimers via ionic interactions. Part of the GP complex (GP-C) together with glycoprotein G1 and the stable signal peptide. Acidification in the endosome triggers rearrangements, which ultimately leads to a 6 helix bundle formed by the two heptad repeat domains (HR1 and HR2) in post-fusion state. The GP-complex interacts with protein Z, which interacts with ribonucleocapsid; these interactions may induce virion budding (By similarity).</text>
</comment>
<comment type="subcellular location">
    <molecule>Stable signal peptide</molecule>
    <subcellularLocation>
        <location evidence="1">Virion membrane</location>
        <topology evidence="1">Single-pass type II membrane protein</topology>
    </subcellularLocation>
    <subcellularLocation>
        <location evidence="1 4">Host endoplasmic reticulum membrane</location>
        <topology evidence="1">Single-pass type II membrane protein</topology>
    </subcellularLocation>
    <subcellularLocation>
        <location evidence="1 4">Host Golgi apparatus membrane</location>
        <topology evidence="1">Single-pass type II membrane protein</topology>
    </subcellularLocation>
    <subcellularLocation>
        <location evidence="1 4">Host cell membrane</location>
        <topology evidence="1">Single-pass type II membrane protein</topology>
    </subcellularLocation>
</comment>
<comment type="subcellular location">
    <molecule>Glycoprotein G1</molecule>
    <subcellularLocation>
        <location evidence="1">Virion membrane</location>
        <topology evidence="1">Peripheral membrane protein</topology>
    </subcellularLocation>
    <subcellularLocation>
        <location evidence="1 4">Host endoplasmic reticulum membrane</location>
        <topology evidence="1">Peripheral membrane protein</topology>
    </subcellularLocation>
    <subcellularLocation>
        <location evidence="1 4">Host Golgi apparatus membrane</location>
        <topology evidence="1">Peripheral membrane protein</topology>
    </subcellularLocation>
    <subcellularLocation>
        <location evidence="1 4">Host cell membrane</location>
        <topology evidence="1">Peripheral membrane protein</topology>
    </subcellularLocation>
</comment>
<comment type="subcellular location">
    <molecule>Glycoprotein G2</molecule>
    <subcellularLocation>
        <location evidence="1">Virion membrane</location>
        <topology evidence="1">Single-pass membrane protein</topology>
    </subcellularLocation>
    <subcellularLocation>
        <location evidence="1 4">Host endoplasmic reticulum membrane</location>
        <topology evidence="1">Single-pass membrane protein</topology>
    </subcellularLocation>
    <subcellularLocation>
        <location evidence="1 4">Host Golgi apparatus membrane</location>
        <topology evidence="1">Single-pass membrane protein</topology>
    </subcellularLocation>
    <subcellularLocation>
        <location evidence="1 4">Host cell membrane</location>
        <topology evidence="1">Single-pass membrane protein</topology>
    </subcellularLocation>
    <text evidence="1 4">Binding to the stable signal peptide masks endogenous ER localization signals in the cytoplasmic domain of G2 to ensure that only the fully assembled, tripartite GP complex is transported for virion assembly.</text>
</comment>
<comment type="domain">
    <molecule>Stable signal peptide</molecule>
    <text evidence="1">The N-terminus is localized at the extracellular side of the GP-C, with a part embedded in the membrane probably.</text>
</comment>
<comment type="domain">
    <molecule>Glycoprotein G2</molecule>
    <text evidence="1 9">Contains 1 fusion peptide at the N-terminus, 2 heptad repeats domains HR1 and HR2 and, at the C-terminus, a cytoplasmic domain that plays a role in ER location (By similarity). Also contains a zinc-binding domain on the cytoplasmic side that allows SSP retention in the GPC complex by accepting a cysteine from SSP as the fourth ligand (PubMed:21068387).</text>
</comment>
<comment type="PTM">
    <molecule>Pre-glycoprotein polyprotein GP complex</molecule>
    <text evidence="1 7">Specific enzymatic cleavages in vivo yield mature proteins (PubMed:18400865). GP-C polyprotein is cleaved in the endoplasmic reticulum by the host protease MBTPS1. Only cleaved glycoprotein is incorporated into virions (By similarity) (PubMed:18400865).</text>
</comment>
<comment type="PTM">
    <molecule>Stable signal peptide</molecule>
    <text evidence="1">The SSP remains stably associated with the GP complex following cleavage by signal peptidase and plays crucial roles in the trafficking of GP through the secretory pathway.</text>
</comment>
<comment type="PTM">
    <molecule>Stable signal peptide</molecule>
    <text evidence="1 11">Myristoylation is necessary for GP2-mediated fusion activity.</text>
</comment>
<comment type="similarity">
    <text evidence="1">Belongs to the arenaviridae GPC protein family.</text>
</comment>
<accession>P26313</accession>
<protein>
    <recommendedName>
        <fullName evidence="1">Pre-glycoprotein polyprotein GP complex</fullName>
        <shortName evidence="1">Pre-GP-C</shortName>
    </recommendedName>
    <component>
        <recommendedName>
            <fullName evidence="1">Stable signal peptide</fullName>
            <shortName evidence="1">SSP</shortName>
        </recommendedName>
    </component>
    <component>
        <recommendedName>
            <fullName evidence="1">Glycoprotein G1</fullName>
            <shortName evidence="1">GP1</shortName>
        </recommendedName>
    </component>
    <component>
        <recommendedName>
            <fullName evidence="1">Glycoprotein G2</fullName>
            <shortName evidence="1">GP2</shortName>
        </recommendedName>
    </component>
</protein>
<organismHost>
    <name type="scientific">Akodon azarae</name>
    <name type="common">Azara's grass mouse</name>
    <dbReference type="NCBI Taxonomy" id="29095"/>
</organismHost>
<organismHost>
    <name type="scientific">Bolomys</name>
    <dbReference type="NCBI Taxonomy" id="10080"/>
</organismHost>
<organismHost>
    <name type="scientific">Calomys laucha</name>
    <name type="common">Small vesper mouse</name>
    <dbReference type="NCBI Taxonomy" id="56211"/>
</organismHost>
<organismHost>
    <name type="scientific">Calomys musculinus</name>
    <name type="common">Drylands vesper mouse</name>
    <dbReference type="NCBI Taxonomy" id="56212"/>
</organismHost>
<organismHost>
    <name type="scientific">Homo sapiens</name>
    <name type="common">Human</name>
    <dbReference type="NCBI Taxonomy" id="9606"/>
</organismHost>
<name>GLYC_JUNIN</name>
<gene>
    <name evidence="1" type="primary">GPC</name>
    <name type="synonym">GP-C</name>
</gene>
<reference key="1">
    <citation type="journal article" date="1991" name="J. Gen. Virol.">
        <title>Molecular organization of Junin virus S RNA: complete nucleotide sequence, relationship with other members of the Arenaviridae and unusual secondary structures.</title>
        <authorList>
            <person name="Ghiringhelli P.D."/>
            <person name="Rivera-Pomar R.V."/>
            <person name="Lozano M.E."/>
            <person name="Grau O."/>
            <person name="Romanowski V."/>
        </authorList>
    </citation>
    <scope>NUCLEOTIDE SEQUENCE [GENOMIC RNA]</scope>
    <source>
        <strain>MC2</strain>
    </source>
</reference>
<reference key="2">
    <citation type="submission" date="2004-03" db="EMBL/GenBank/DDBJ databases">
        <authorList>
            <person name="Romanowski V."/>
        </authorList>
    </citation>
    <scope>SEQUENCE REVISION TO 43-51; 58-80 AND 143</scope>
</reference>
<reference key="3">
    <citation type="journal article" date="2004" name="J. Virol.">
        <title>The signal peptide of the Junin arenavirus envelope glycoprotein is myristoylated and forms an essential subunit of the mature G1-G2 complex.</title>
        <authorList>
            <person name="York J."/>
            <person name="Romanowski V."/>
            <person name="Lu M."/>
            <person name="Nunberg J.H."/>
        </authorList>
    </citation>
    <scope>SUBUNIT (STABLE SIGNAL PEPTIDE)</scope>
    <scope>MYRISTOYLATION AT GLY-2</scope>
    <scope>MUTAGENESIS OF GLY-2</scope>
    <scope>FUNCTION (STABLE SIGNAL PEPTIDE)</scope>
</reference>
<reference key="4">
    <citation type="journal article" date="2006" name="J. Virol.">
        <title>Role of the stable signal peptide and cytoplasmic domain of G2 in regulating intracellular transport of the Junin virus envelope glycoprotein complex.</title>
        <authorList>
            <person name="Agnihothram S.S."/>
            <person name="York J."/>
            <person name="Nunberg J.H."/>
        </authorList>
    </citation>
    <scope>SUBCELLULAR LOCATION (GLYCOPROTEIN G2)</scope>
    <scope>MUTAGENESIS OF 476-LYS-LYS-477 AND 482-ARG-ARG-483</scope>
    <scope>SUBCELLULAR LOCATION (STABLE SIGNAL PEPTIDE)</scope>
    <scope>SUBCELLULAR LOCATION (GLYCOPROTEIN G1)</scope>
</reference>
<reference key="5">
    <citation type="journal article" date="2006" name="J. Virol.">
        <title>Role of the stable signal peptide of Junin arenavirus envelope glycoprotein in pH-dependent membrane fusion.</title>
        <authorList>
            <person name="York J."/>
            <person name="Nunberg J.H."/>
        </authorList>
    </citation>
    <scope>FUNCTION (STABLE SIGNAL PEPTIDE)</scope>
    <scope>MUTAGENESIS OF GLU-17; LYS-33; LYS-40 AND ARG-55</scope>
</reference>
<reference key="6">
    <citation type="journal article" date="2007" name="Nature">
        <title>Transferrin receptor 1 is a cellular receptor for New World haemorrhagic fever arenaviruses.</title>
        <authorList>
            <person name="Radoshitzky S.R."/>
            <person name="Abraham J."/>
            <person name="Spiropoulou C.F."/>
            <person name="Kuhn J.H."/>
            <person name="Nguyen D."/>
            <person name="Li W."/>
            <person name="Nagel J."/>
            <person name="Schmidt P.J."/>
            <person name="Nunberg J.H."/>
            <person name="Andrews N.C."/>
            <person name="Farzan M."/>
            <person name="Choe H."/>
        </authorList>
    </citation>
    <scope>FUNCTION (GLYCOPROTEIN G1)</scope>
    <scope>INTERACTION WITH HOST TFRC (GLYCOPROTEIN G1)</scope>
</reference>
<reference key="7">
    <citation type="journal article" date="2008" name="J. Virol.">
        <title>Site 1 protease is required for proteolytic processing of the glycoproteins of the South American hemorrhagic fever viruses Junin, Machupo, and Guanarito.</title>
        <authorList>
            <person name="Rojek J.M."/>
            <person name="Lee A.M."/>
            <person name="Nguyen N."/>
            <person name="Spiropoulou C.F."/>
            <person name="Kunz S."/>
        </authorList>
    </citation>
    <scope>CLEAVAGE BY HOST MBTPS1/SKI-1 (PRE-GLYCOPROTEIN POLYPROTEIN GP COMPLEX)</scope>
</reference>
<reference key="8">
    <citation type="journal article" date="2009" name="Biotechnol. J.">
        <title>Involvement of cellular proteins in Junin arenavirus entry.</title>
        <authorList>
            <person name="Martinez M.G."/>
            <person name="Forlenza M.B."/>
            <person name="Candurra N.A."/>
        </authorList>
    </citation>
    <scope>FUNCTION (GLYCOPROTEIN G1)</scope>
</reference>
<reference key="9">
    <citation type="journal article" date="2011" name="J. Biol. Chem.">
        <title>Structure of a zinc-binding domain in the Junin virus envelope glycoprotein.</title>
        <authorList>
            <person name="Briknarova K."/>
            <person name="Thomas C.J."/>
            <person name="York J."/>
            <person name="Nunberg J.H."/>
        </authorList>
    </citation>
    <scope>STRUCTURE BY NMR OF 445-485 IN COMPLEX WITH ZINC</scope>
    <scope>DOMAIN (GLYCOPROTEIN G2)</scope>
</reference>
<reference key="10">
    <citation type="journal article" date="2024" name="Viruses">
        <title>Cellular N-Myristoyl Transferases Are Required for Mammarenavirus Multiplication.</title>
        <authorList>
            <person name="Witwit H."/>
            <person name="Betancourt C.A."/>
            <person name="Cubitt B."/>
            <person name="Khafaji R."/>
            <person name="Kowalski H."/>
            <person name="Jackson N."/>
            <person name="Ye C."/>
            <person name="Martinez-Sobrido L."/>
            <person name="de la Torre J.C."/>
        </authorList>
    </citation>
    <scope>MYRISTOYLATION (STABLE SIGNAL PEPTIDE)</scope>
    <source>
        <strain>Candid vaccine</strain>
    </source>
</reference>
<reference key="11">
    <citation type="journal article" date="2015" name="Cell Host Microbe">
        <title>Molecular Basis for Antibody-Mediated Neutralization of New World Hemorrhagic Fever Mammarenaviruses.</title>
        <authorList>
            <person name="Mahmutovic S."/>
            <person name="Clark L."/>
            <person name="Levis S.C."/>
            <person name="Briggiler A.M."/>
            <person name="Enria D.A."/>
            <person name="Harrison S.C."/>
            <person name="Abraham J."/>
        </authorList>
    </citation>
    <scope>X-RAY CRYSTALLOGRAPHY (1.82 ANGSTROMS) OF 87-227</scope>
    <scope>GLYCOSYLATION AT ASN-105; ASN-166 AND ASN-178</scope>
    <scope>DISULFIDE BONDS</scope>
</reference>
<sequence length="485" mass="55607">MGQFISFMQEIPTFLQEALNIALVAVSLIAIIKGVVNLYKSGLFQFFVFLALAGRSCTEEAFKIGLHTEFQTVSFSMVGLFSNNPHDLPLLCTLNKSHLYIKGGNASFKISFDDIAVLLPEYDVIIQHPADMSWCSKSDDQIWLSQWFMNAVGHDWYLDPPFLCRNRTKTEGFIFQVNTSKTGINENYAKKFKTGMHHLYREYPDSCLDGKLCLMKAQPTSWPLQCPLDHVNTLHFLTRGKNIQLPRRSLKAFFSWSLTDSSGKDTPGGYCLEEWMLVAAKMKCFGNTAVAKCNLNHDSEFCDMLRLFDYNKNAIKTLNDETKKQVNLMGQTINALISDNLLMKNKIRELMSVPYCNYTKFWYVNHTLSGQHSLPRCWLIKNNSYLNISDFRNDWILESDFLISEMLSKEYSDRQGKTPLTLVDICFWSTVFFTASLFLHLVGIPTHRHIRGEACPLPHRLNSLGGCRCGKYPNLKKPTVWRRGH</sequence>
<feature type="initiator methionine" description="Removed; by host" evidence="1 3">
    <location>
        <position position="1"/>
    </location>
</feature>
<feature type="chain" id="PRO_0000353850" description="Pre-glycoprotein polyprotein GP complex" evidence="1">
    <location>
        <begin position="2"/>
        <end position="485"/>
    </location>
</feature>
<feature type="chain" id="PRO_0000353851" description="Stable signal peptide" evidence="1">
    <location>
        <begin position="2"/>
        <end position="58"/>
    </location>
</feature>
<feature type="chain" id="PRO_0000036597" description="Glycoprotein G1" evidence="1">
    <location>
        <begin position="59"/>
        <end position="251"/>
    </location>
</feature>
<feature type="chain" id="PRO_0000036598" description="Glycoprotein G2" evidence="1">
    <location>
        <begin position="252"/>
        <end position="485"/>
    </location>
</feature>
<feature type="topological domain" description="Extracellular" evidence="1">
    <location>
        <begin position="2"/>
        <end position="17"/>
    </location>
</feature>
<feature type="transmembrane region" description="Helical" evidence="1">
    <location>
        <begin position="18"/>
        <end position="33"/>
    </location>
</feature>
<feature type="topological domain" description="Cytoplasmic" evidence="1">
    <location>
        <begin position="34"/>
        <end position="58"/>
    </location>
</feature>
<feature type="topological domain" description="Extracellular" evidence="1">
    <location>
        <begin position="59"/>
        <end position="424"/>
    </location>
</feature>
<feature type="transmembrane region" description="Helical" evidence="1">
    <location>
        <begin position="425"/>
        <end position="445"/>
    </location>
</feature>
<feature type="topological domain" description="Cytoplasmic" evidence="1">
    <location>
        <begin position="446"/>
        <end position="485"/>
    </location>
</feature>
<feature type="region of interest" description="Fusion" evidence="1">
    <location>
        <begin position="250"/>
        <end position="286"/>
    </location>
</feature>
<feature type="region of interest" description="HR1" evidence="1">
    <location>
        <begin position="287"/>
        <end position="355"/>
    </location>
</feature>
<feature type="region of interest" description="HR2" evidence="1">
    <location>
        <begin position="360"/>
        <end position="423"/>
    </location>
</feature>
<feature type="binding site" evidence="1 9">
    <location>
        <position position="57"/>
    </location>
    <ligand>
        <name>Zn(2+)</name>
        <dbReference type="ChEBI" id="CHEBI:29105"/>
        <label>1</label>
    </ligand>
</feature>
<feature type="binding site" evidence="1 9">
    <location>
        <position position="447"/>
    </location>
    <ligand>
        <name>Zn(2+)</name>
        <dbReference type="ChEBI" id="CHEBI:29105"/>
        <label>2</label>
    </ligand>
</feature>
<feature type="binding site" evidence="1 9">
    <location>
        <position position="449"/>
    </location>
    <ligand>
        <name>Zn(2+)</name>
        <dbReference type="ChEBI" id="CHEBI:29105"/>
        <label>2</label>
    </ligand>
</feature>
<feature type="binding site" evidence="1 9">
    <location>
        <position position="455"/>
    </location>
    <ligand>
        <name>Zn(2+)</name>
        <dbReference type="ChEBI" id="CHEBI:29105"/>
        <label>2</label>
    </ligand>
</feature>
<feature type="binding site" evidence="1 9">
    <location>
        <position position="459"/>
    </location>
    <ligand>
        <name>Zn(2+)</name>
        <dbReference type="ChEBI" id="CHEBI:29105"/>
        <label>1</label>
    </ligand>
</feature>
<feature type="binding site" evidence="1 9">
    <location>
        <position position="467"/>
    </location>
    <ligand>
        <name>Zn(2+)</name>
        <dbReference type="ChEBI" id="CHEBI:29105"/>
        <label>1</label>
    </ligand>
</feature>
<feature type="binding site" evidence="1 9">
    <location>
        <position position="469"/>
    </location>
    <ligand>
        <name>Zn(2+)</name>
        <dbReference type="ChEBI" id="CHEBI:29105"/>
        <label>1</label>
    </ligand>
</feature>
<feature type="binding site" evidence="1 9">
    <location>
        <position position="485"/>
    </location>
    <ligand>
        <name>Zn(2+)</name>
        <dbReference type="ChEBI" id="CHEBI:29105"/>
        <label>2</label>
    </ligand>
</feature>
<feature type="site" description="Important for GP-C-mediated membrane fusion" evidence="5">
    <location>
        <position position="33"/>
    </location>
</feature>
<feature type="site" description="Cleavage; by host signal peptidase" evidence="1">
    <location>
        <begin position="58"/>
        <end position="59"/>
    </location>
</feature>
<feature type="site" description="Cleavage; by host MBTPS1" evidence="1">
    <location>
        <begin position="251"/>
        <end position="252"/>
    </location>
</feature>
<feature type="lipid moiety-binding region" description="N-myristoyl glycine; by host" evidence="1 3">
    <location>
        <position position="2"/>
    </location>
</feature>
<feature type="glycosylation site" description="N-linked (GlcNAc...) asparagine; by host" evidence="1">
    <location>
        <position position="95"/>
    </location>
</feature>
<feature type="glycosylation site" description="N-linked (GlcNAc...) asparagine; by host" evidence="1 10">
    <location>
        <position position="105"/>
    </location>
</feature>
<feature type="glycosylation site" description="N-linked (GlcNAc...) asparagine; by host" evidence="1 10">
    <location>
        <position position="166"/>
    </location>
</feature>
<feature type="glycosylation site" description="N-linked (GlcNAc...) asparagine; by host" evidence="1 10">
    <location>
        <position position="178"/>
    </location>
</feature>
<feature type="glycosylation site" description="N-linked (GlcNAc...) asparagine; by host" evidence="1">
    <location>
        <position position="357"/>
    </location>
</feature>
<feature type="glycosylation site" description="N-linked (GlcNAc...) asparagine; by host" evidence="1">
    <location>
        <position position="365"/>
    </location>
</feature>
<feature type="glycosylation site" description="N-linked (GlcNAc...) asparagine; by host" evidence="1">
    <location>
        <position position="382"/>
    </location>
</feature>
<feature type="glycosylation site" description="N-linked (GlcNAc...) asparagine; by host" evidence="1">
    <location>
        <position position="387"/>
    </location>
</feature>
<feature type="disulfide bond" evidence="1 10">
    <location>
        <begin position="92"/>
        <end position="226"/>
    </location>
</feature>
<feature type="disulfide bond" evidence="10">
    <location>
        <begin position="135"/>
        <end position="164"/>
    </location>
</feature>
<feature type="disulfide bond" evidence="10">
    <location>
        <begin position="207"/>
        <end position="213"/>
    </location>
</feature>
<feature type="disulfide bond" evidence="1">
    <location>
        <begin position="271"/>
        <end position="284"/>
    </location>
</feature>
<feature type="disulfide bond" evidence="1">
    <location>
        <begin position="293"/>
        <end position="302"/>
    </location>
</feature>
<feature type="disulfide bond" evidence="1">
    <location>
        <begin position="356"/>
        <end position="377"/>
    </location>
</feature>
<feature type="mutagenesis site" description="Reduces membrane fusion activity. No effect on GP complex formation." evidence="3">
    <original>G</original>
    <variation>A</variation>
    <location>
        <position position="2"/>
    </location>
</feature>
<feature type="mutagenesis site" description="No effect on GP-C-mediated membrane fusion." evidence="5">
    <original>E</original>
    <variation>A</variation>
    <location>
        <position position="17"/>
    </location>
</feature>
<feature type="mutagenesis site" description="Complete loss of GP-C-mediated membrane fusion." evidence="5">
    <original>K</original>
    <variation>A</variation>
    <location>
        <position position="33"/>
    </location>
</feature>
<feature type="mutagenesis site" description="No effect on GP-C-mediated membrane fusion." evidence="5">
    <original>K</original>
    <variation>A</variation>
    <location>
        <position position="40"/>
    </location>
</feature>
<feature type="mutagenesis site" description="No effect on GP-C-mediated membrane fusion." evidence="5">
    <original>R</original>
    <variation>A</variation>
    <location>
        <position position="55"/>
    </location>
</feature>
<feature type="mutagenesis site" description="Induces transport to the cell surface in the absence of SSP. No effect on SSP binding." evidence="4">
    <original>KK</original>
    <variation>AA</variation>
    <location>
        <begin position="476"/>
        <end position="477"/>
    </location>
</feature>
<feature type="mutagenesis site" description="Induces transport to the cell surface in the absence of SSP. No effect on SSP binding." evidence="4">
    <original>RR</original>
    <variation>AA</variation>
    <location>
        <begin position="482"/>
        <end position="483"/>
    </location>
</feature>
<feature type="strand" evidence="13">
    <location>
        <begin position="90"/>
        <end position="94"/>
    </location>
</feature>
<feature type="turn" evidence="13">
    <location>
        <begin position="95"/>
        <end position="97"/>
    </location>
</feature>
<feature type="strand" evidence="13">
    <location>
        <begin position="98"/>
        <end position="103"/>
    </location>
</feature>
<feature type="strand" evidence="13">
    <location>
        <begin position="106"/>
        <end position="114"/>
    </location>
</feature>
<feature type="turn" evidence="13">
    <location>
        <begin position="120"/>
        <end position="122"/>
    </location>
</feature>
<feature type="strand" evidence="13">
    <location>
        <begin position="123"/>
        <end position="128"/>
    </location>
</feature>
<feature type="helix" evidence="13">
    <location>
        <begin position="129"/>
        <end position="135"/>
    </location>
</feature>
<feature type="helix" evidence="13">
    <location>
        <begin position="139"/>
        <end position="151"/>
    </location>
</feature>
<feature type="turn" evidence="13">
    <location>
        <begin position="156"/>
        <end position="158"/>
    </location>
</feature>
<feature type="strand" evidence="13">
    <location>
        <begin position="162"/>
        <end position="164"/>
    </location>
</feature>
<feature type="strand" evidence="13">
    <location>
        <begin position="175"/>
        <end position="178"/>
    </location>
</feature>
<feature type="helix" evidence="13">
    <location>
        <begin position="183"/>
        <end position="185"/>
    </location>
</feature>
<feature type="helix" evidence="13">
    <location>
        <begin position="186"/>
        <end position="199"/>
    </location>
</feature>
<feature type="strand" evidence="13">
    <location>
        <begin position="214"/>
        <end position="219"/>
    </location>
</feature>
<feature type="strand" evidence="12">
    <location>
        <begin position="447"/>
        <end position="449"/>
    </location>
</feature>
<feature type="strand" evidence="12">
    <location>
        <begin position="451"/>
        <end position="454"/>
    </location>
</feature>
<feature type="strand" evidence="12">
    <location>
        <begin position="465"/>
        <end position="467"/>
    </location>
</feature>
<feature type="turn" evidence="12">
    <location>
        <begin position="468"/>
        <end position="471"/>
    </location>
</feature>
<feature type="strand" evidence="12">
    <location>
        <begin position="480"/>
        <end position="482"/>
    </location>
</feature>
<dbReference type="EMBL" id="D10072">
    <property type="protein sequence ID" value="BAA00964.2"/>
    <property type="molecule type" value="Genomic_RNA"/>
</dbReference>
<dbReference type="PIR" id="JT0978">
    <property type="entry name" value="VGXPJV"/>
</dbReference>
<dbReference type="PDB" id="2L0Z">
    <property type="method" value="NMR"/>
    <property type="chains" value="A=445-485"/>
</dbReference>
<dbReference type="PDB" id="5EN2">
    <property type="method" value="X-ray"/>
    <property type="resolution" value="1.82 A"/>
    <property type="chains" value="C=87-227"/>
</dbReference>
<dbReference type="PDB" id="5W1K">
    <property type="method" value="X-ray"/>
    <property type="resolution" value="3.99 A"/>
    <property type="chains" value="E/J/P/R=87-228"/>
</dbReference>
<dbReference type="PDBsum" id="2L0Z"/>
<dbReference type="PDBsum" id="5EN2"/>
<dbReference type="PDBsum" id="5W1K"/>
<dbReference type="SMR" id="P26313"/>
<dbReference type="TCDB" id="1.G.8.1.2">
    <property type="family name" value="the arenavirus fusion protein (av-fp) family"/>
</dbReference>
<dbReference type="GlyCosmos" id="P26313">
    <property type="glycosylation" value="8 sites, No reported glycans"/>
</dbReference>
<dbReference type="iPTMnet" id="P26313"/>
<dbReference type="ABCD" id="P26313">
    <property type="antibodies" value="5 sequenced antibodies"/>
</dbReference>
<dbReference type="EvolutionaryTrace" id="P26313"/>
<dbReference type="Proteomes" id="UP000127886">
    <property type="component" value="Genome"/>
</dbReference>
<dbReference type="GO" id="GO:0044167">
    <property type="term" value="C:host cell endoplasmic reticulum membrane"/>
    <property type="evidence" value="ECO:0007669"/>
    <property type="project" value="UniProtKB-SubCell"/>
</dbReference>
<dbReference type="GO" id="GO:0044178">
    <property type="term" value="C:host cell Golgi membrane"/>
    <property type="evidence" value="ECO:0007669"/>
    <property type="project" value="UniProtKB-SubCell"/>
</dbReference>
<dbReference type="GO" id="GO:0020002">
    <property type="term" value="C:host cell plasma membrane"/>
    <property type="evidence" value="ECO:0007669"/>
    <property type="project" value="UniProtKB-SubCell"/>
</dbReference>
<dbReference type="GO" id="GO:0016020">
    <property type="term" value="C:membrane"/>
    <property type="evidence" value="ECO:0007669"/>
    <property type="project" value="UniProtKB-UniRule"/>
</dbReference>
<dbReference type="GO" id="GO:0019031">
    <property type="term" value="C:viral envelope"/>
    <property type="evidence" value="ECO:0007669"/>
    <property type="project" value="UniProtKB-UniRule"/>
</dbReference>
<dbReference type="GO" id="GO:0055036">
    <property type="term" value="C:virion membrane"/>
    <property type="evidence" value="ECO:0007669"/>
    <property type="project" value="UniProtKB-SubCell"/>
</dbReference>
<dbReference type="GO" id="GO:0046872">
    <property type="term" value="F:metal ion binding"/>
    <property type="evidence" value="ECO:0007669"/>
    <property type="project" value="UniProtKB-KW"/>
</dbReference>
<dbReference type="GO" id="GO:0039654">
    <property type="term" value="P:fusion of virus membrane with host endosome membrane"/>
    <property type="evidence" value="ECO:0007669"/>
    <property type="project" value="UniProtKB-UniRule"/>
</dbReference>
<dbReference type="GO" id="GO:0019065">
    <property type="term" value="P:receptor-mediated endocytosis of virus by host cell"/>
    <property type="evidence" value="ECO:0007669"/>
    <property type="project" value="UniProtKB-UniRule"/>
</dbReference>
<dbReference type="GO" id="GO:0019062">
    <property type="term" value="P:virion attachment to host cell"/>
    <property type="evidence" value="ECO:0007669"/>
    <property type="project" value="UniProtKB-UniRule"/>
</dbReference>
<dbReference type="Gene3D" id="6.10.140.1590">
    <property type="match status" value="1"/>
</dbReference>
<dbReference type="Gene3D" id="2.20.28.180">
    <property type="entry name" value="Arenavirus glycoprotein, zinc binding domain"/>
    <property type="match status" value="1"/>
</dbReference>
<dbReference type="HAMAP" id="MF_04084">
    <property type="entry name" value="ARENA_GPC"/>
    <property type="match status" value="1"/>
</dbReference>
<dbReference type="InterPro" id="IPR001535">
    <property type="entry name" value="Arena_glycoprot"/>
</dbReference>
<dbReference type="InterPro" id="IPR043015">
    <property type="entry name" value="Arena_glycoprot_zinc-bd"/>
</dbReference>
<dbReference type="Pfam" id="PF00798">
    <property type="entry name" value="Arena_glycoprot"/>
    <property type="match status" value="2"/>
</dbReference>
<dbReference type="PIRSF" id="PIRSF004028">
    <property type="entry name" value="GPC_ArenaV"/>
    <property type="match status" value="1"/>
</dbReference>
<proteinExistence type="evidence at protein level"/>
<keyword id="KW-0002">3D-structure</keyword>
<keyword id="KW-1015">Disulfide bond</keyword>
<keyword id="KW-1170">Fusion of virus membrane with host endosomal membrane</keyword>
<keyword id="KW-1168">Fusion of virus membrane with host membrane</keyword>
<keyword id="KW-0325">Glycoprotein</keyword>
<keyword id="KW-1032">Host cell membrane</keyword>
<keyword id="KW-1038">Host endoplasmic reticulum</keyword>
<keyword id="KW-1040">Host Golgi apparatus</keyword>
<keyword id="KW-1043">Host membrane</keyword>
<keyword id="KW-0945">Host-virus interaction</keyword>
<keyword id="KW-0449">Lipoprotein</keyword>
<keyword id="KW-0472">Membrane</keyword>
<keyword id="KW-0479">Metal-binding</keyword>
<keyword id="KW-0519">Myristate</keyword>
<keyword id="KW-0812">Transmembrane</keyword>
<keyword id="KW-1133">Transmembrane helix</keyword>
<keyword id="KW-1161">Viral attachment to host cell</keyword>
<keyword id="KW-0261">Viral envelope protein</keyword>
<keyword id="KW-1162">Viral penetration into host cytoplasm</keyword>
<keyword id="KW-0946">Virion</keyword>
<keyword id="KW-1164">Virus endocytosis by host</keyword>
<keyword id="KW-1160">Virus entry into host cell</keyword>
<keyword id="KW-0862">Zinc</keyword>
<evidence type="ECO:0000255" key="1">
    <source>
        <dbReference type="HAMAP-Rule" id="MF_04084"/>
    </source>
</evidence>
<evidence type="ECO:0000255" key="2">
    <source>
        <dbReference type="HAMAP-Rule" id="MF_04087"/>
    </source>
</evidence>
<evidence type="ECO:0000269" key="3">
    <source>
    </source>
</evidence>
<evidence type="ECO:0000269" key="4">
    <source>
    </source>
</evidence>
<evidence type="ECO:0000269" key="5">
    <source>
    </source>
</evidence>
<evidence type="ECO:0000269" key="6">
    <source>
    </source>
</evidence>
<evidence type="ECO:0000269" key="7">
    <source>
    </source>
</evidence>
<evidence type="ECO:0000269" key="8">
    <source>
    </source>
</evidence>
<evidence type="ECO:0000269" key="9">
    <source>
    </source>
</evidence>
<evidence type="ECO:0000269" key="10">
    <source>
    </source>
</evidence>
<evidence type="ECO:0000305" key="11">
    <source>
    </source>
</evidence>
<evidence type="ECO:0007829" key="12">
    <source>
        <dbReference type="PDB" id="2L0Z"/>
    </source>
</evidence>
<evidence type="ECO:0007829" key="13">
    <source>
        <dbReference type="PDB" id="5EN2"/>
    </source>
</evidence>